<accession>Q6L8F3</accession>
<gene>
    <name evidence="1" type="primary">slc39a6</name>
    <name evidence="7" type="synonym">liv1</name>
    <name type="synonym">zip6</name>
    <name type="ORF">wu:fc25a09</name>
</gene>
<protein>
    <recommendedName>
        <fullName evidence="1">Zinc transporter ZIP6</fullName>
    </recommendedName>
    <alternativeName>
        <fullName>Estrogen-regulated protein LIV-1</fullName>
    </alternativeName>
    <alternativeName>
        <fullName>Solute carrier family 39 member 6</fullName>
    </alternativeName>
    <alternativeName>
        <fullName>Zrt- and Irt-like protein 6</fullName>
        <shortName>ZIP-6</shortName>
    </alternativeName>
</protein>
<evidence type="ECO:0000250" key="1">
    <source>
        <dbReference type="UniProtKB" id="Q13433"/>
    </source>
</evidence>
<evidence type="ECO:0000255" key="2"/>
<evidence type="ECO:0000255" key="3">
    <source>
        <dbReference type="PROSITE-ProRule" id="PRU00498"/>
    </source>
</evidence>
<evidence type="ECO:0000256" key="4">
    <source>
        <dbReference type="SAM" id="MobiDB-lite"/>
    </source>
</evidence>
<evidence type="ECO:0000269" key="5">
    <source>
    </source>
</evidence>
<evidence type="ECO:0000269" key="6">
    <source>
    </source>
</evidence>
<evidence type="ECO:0000303" key="7">
    <source>
    </source>
</evidence>
<evidence type="ECO:0000305" key="8"/>
<evidence type="ECO:0000312" key="9">
    <source>
        <dbReference type="EMBL" id="BAD18961.1"/>
    </source>
</evidence>
<feature type="chain" id="PRO_0000458459" description="Zinc transporter ZIP6">
    <location>
        <begin position="1"/>
        <end position="742"/>
    </location>
</feature>
<feature type="topological domain" description="Extracellular" evidence="1">
    <location>
        <begin position="1"/>
        <end position="353"/>
    </location>
</feature>
<feature type="transmembrane region" description="Helical" evidence="2">
    <location>
        <begin position="354"/>
        <end position="374"/>
    </location>
</feature>
<feature type="topological domain" description="Cytoplasmic" evidence="8">
    <location>
        <begin position="375"/>
        <end position="385"/>
    </location>
</feature>
<feature type="transmembrane region" description="Helical" evidence="2">
    <location>
        <begin position="386"/>
        <end position="406"/>
    </location>
</feature>
<feature type="topological domain" description="Extracellular" evidence="8">
    <location>
        <begin position="407"/>
        <end position="430"/>
    </location>
</feature>
<feature type="transmembrane region" description="Helical" evidence="2">
    <location>
        <begin position="431"/>
        <end position="451"/>
    </location>
</feature>
<feature type="topological domain" description="Cytoplasmic" evidence="8">
    <location>
        <begin position="452"/>
        <end position="644"/>
    </location>
</feature>
<feature type="transmembrane region" description="Helical" evidence="2">
    <location>
        <begin position="645"/>
        <end position="665"/>
    </location>
</feature>
<feature type="topological domain" description="Extracellular" evidence="8">
    <location>
        <begin position="666"/>
        <end position="671"/>
    </location>
</feature>
<feature type="transmembrane region" description="Helical" evidence="2">
    <location>
        <begin position="672"/>
        <end position="692"/>
    </location>
</feature>
<feature type="topological domain" description="Cytoplasmic" evidence="8">
    <location>
        <begin position="693"/>
        <end position="710"/>
    </location>
</feature>
<feature type="transmembrane region" description="Helical" evidence="2">
    <location>
        <begin position="711"/>
        <end position="731"/>
    </location>
</feature>
<feature type="topological domain" description="Extracellular" evidence="1">
    <location>
        <begin position="732"/>
        <end position="742"/>
    </location>
</feature>
<feature type="region of interest" description="Disordered" evidence="4">
    <location>
        <begin position="148"/>
        <end position="182"/>
    </location>
</feature>
<feature type="region of interest" description="Disordered" evidence="4">
    <location>
        <begin position="191"/>
        <end position="210"/>
    </location>
</feature>
<feature type="region of interest" description="Disordered" evidence="4">
    <location>
        <begin position="220"/>
        <end position="260"/>
    </location>
</feature>
<feature type="region of interest" description="Disordered" evidence="4">
    <location>
        <begin position="310"/>
        <end position="342"/>
    </location>
</feature>
<feature type="compositionally biased region" description="Basic and acidic residues" evidence="4">
    <location>
        <begin position="152"/>
        <end position="165"/>
    </location>
</feature>
<feature type="compositionally biased region" description="Polar residues" evidence="4">
    <location>
        <begin position="192"/>
        <end position="206"/>
    </location>
</feature>
<feature type="compositionally biased region" description="Polar residues" evidence="4">
    <location>
        <begin position="222"/>
        <end position="236"/>
    </location>
</feature>
<feature type="compositionally biased region" description="Basic and acidic residues" evidence="4">
    <location>
        <begin position="239"/>
        <end position="260"/>
    </location>
</feature>
<feature type="compositionally biased region" description="Basic residues" evidence="4">
    <location>
        <begin position="316"/>
        <end position="339"/>
    </location>
</feature>
<feature type="glycosylation site" description="N-linked (GlcNAc...) asparagine" evidence="3">
    <location>
        <position position="94"/>
    </location>
</feature>
<feature type="glycosylation site" description="N-linked (GlcNAc...) asparagine" evidence="3">
    <location>
        <position position="127"/>
    </location>
</feature>
<feature type="glycosylation site" description="N-linked (GlcNAc...) asparagine" evidence="3">
    <location>
        <position position="212"/>
    </location>
</feature>
<feature type="glycosylation site" description="N-linked (GlcNAc...) asparagine" evidence="3">
    <location>
        <position position="232"/>
    </location>
</feature>
<feature type="glycosylation site" description="N-linked (GlcNAc...) asparagine" evidence="3">
    <location>
        <position position="237"/>
    </location>
</feature>
<feature type="glycosylation site" description="N-linked (GlcNAc...) asparagine" evidence="3">
    <location>
        <position position="267"/>
    </location>
</feature>
<feature type="glycosylation site" description="N-linked (GlcNAc...) asparagine" evidence="3">
    <location>
        <position position="337"/>
    </location>
</feature>
<comment type="function">
    <text evidence="5 6">Acts as a zinc-influx transporter which plays a role in zinc homeostasis and in the induction of epithelial-to-mesenchymal transition (EMT).</text>
</comment>
<comment type="catalytic activity">
    <reaction evidence="1">
        <text>Zn(2+)(in) = Zn(2+)(out)</text>
        <dbReference type="Rhea" id="RHEA:29351"/>
        <dbReference type="ChEBI" id="CHEBI:29105"/>
    </reaction>
</comment>
<comment type="subcellular location">
    <subcellularLocation>
        <location evidence="1">Cell membrane</location>
        <topology evidence="2">Multi-pass membrane protein</topology>
    </subcellularLocation>
</comment>
<comment type="PTM">
    <text evidence="1">Cleaved on the N-terminus before locating to the plasma membrane.</text>
</comment>
<comment type="PTM">
    <text evidence="1">N-glycosylated.</text>
</comment>
<comment type="disruption phenotype">
    <text evidence="6">Homozygous knockout zebrafish lacking slc39a6 develop normally during gastrulation.</text>
</comment>
<comment type="similarity">
    <text evidence="8">Belongs to the ZIP transporter (TC 2.A.5) family.</text>
</comment>
<dbReference type="EMBL" id="AB126260">
    <property type="protein sequence ID" value="BAD18961.1"/>
    <property type="molecule type" value="mRNA"/>
</dbReference>
<dbReference type="EMBL" id="BX324211">
    <property type="status" value="NOT_ANNOTATED_CDS"/>
    <property type="molecule type" value="Genomic_DNA"/>
</dbReference>
<dbReference type="RefSeq" id="NP_001001591.1">
    <property type="nucleotide sequence ID" value="NM_001001591.1"/>
</dbReference>
<dbReference type="TCDB" id="2.A.5.4.2">
    <property type="family name" value="the zinc (zn(2+))-iron (fe(2+)) permease (zip) family"/>
</dbReference>
<dbReference type="GeneID" id="324303"/>
<dbReference type="KEGG" id="dre:324303"/>
<dbReference type="AGR" id="ZFIN:ZDB-GENE-030131-3023"/>
<dbReference type="CTD" id="25800"/>
<dbReference type="ZFIN" id="ZDB-GENE-030131-3023">
    <property type="gene designation" value="slc39a6"/>
</dbReference>
<dbReference type="OrthoDB" id="200954at2759"/>
<dbReference type="Reactome" id="R-DRE-442380">
    <property type="pathway name" value="Zinc influx into cells by the SLC39 gene family"/>
</dbReference>
<dbReference type="PRO" id="PR:Q6L8F3"/>
<dbReference type="Proteomes" id="UP000000437">
    <property type="component" value="Chromosome 2"/>
</dbReference>
<dbReference type="GO" id="GO:0045121">
    <property type="term" value="C:membrane raft"/>
    <property type="evidence" value="ECO:0000250"/>
    <property type="project" value="UniProtKB"/>
</dbReference>
<dbReference type="GO" id="GO:0005886">
    <property type="term" value="C:plasma membrane"/>
    <property type="evidence" value="ECO:0000318"/>
    <property type="project" value="GO_Central"/>
</dbReference>
<dbReference type="GO" id="GO:0140410">
    <property type="term" value="F:monoatomic cation:bicarbonate symporter activity"/>
    <property type="evidence" value="ECO:0000318"/>
    <property type="project" value="GO_Central"/>
</dbReference>
<dbReference type="GO" id="GO:0005385">
    <property type="term" value="F:zinc ion transmembrane transporter activity"/>
    <property type="evidence" value="ECO:0000315"/>
    <property type="project" value="UniProtKB"/>
</dbReference>
<dbReference type="GO" id="GO:0042074">
    <property type="term" value="P:cell migration involved in gastrulation"/>
    <property type="evidence" value="ECO:0000315"/>
    <property type="project" value="ZFIN"/>
</dbReference>
<dbReference type="GO" id="GO:0001837">
    <property type="term" value="P:epithelial to mesenchymal transition"/>
    <property type="evidence" value="ECO:0000315"/>
    <property type="project" value="ZFIN"/>
</dbReference>
<dbReference type="GO" id="GO:0030003">
    <property type="term" value="P:intracellular monoatomic cation homeostasis"/>
    <property type="evidence" value="ECO:0000318"/>
    <property type="project" value="GO_Central"/>
</dbReference>
<dbReference type="GO" id="GO:0006882">
    <property type="term" value="P:intracellular zinc ion homeostasis"/>
    <property type="evidence" value="ECO:0000315"/>
    <property type="project" value="ZFIN"/>
</dbReference>
<dbReference type="GO" id="GO:0033077">
    <property type="term" value="P:T cell differentiation in thymus"/>
    <property type="evidence" value="ECO:0000315"/>
    <property type="project" value="ZFIN"/>
</dbReference>
<dbReference type="GO" id="GO:0050852">
    <property type="term" value="P:T cell receptor signaling pathway"/>
    <property type="evidence" value="ECO:0000250"/>
    <property type="project" value="UniProtKB"/>
</dbReference>
<dbReference type="GO" id="GO:0071578">
    <property type="term" value="P:zinc ion import across plasma membrane"/>
    <property type="evidence" value="ECO:0000315"/>
    <property type="project" value="UniProtKB"/>
</dbReference>
<dbReference type="GO" id="GO:0006829">
    <property type="term" value="P:zinc ion transport"/>
    <property type="evidence" value="ECO:0000250"/>
    <property type="project" value="ZFIN"/>
</dbReference>
<dbReference type="InterPro" id="IPR003689">
    <property type="entry name" value="ZIP"/>
</dbReference>
<dbReference type="InterPro" id="IPR050799">
    <property type="entry name" value="ZIP_Transporter"/>
</dbReference>
<dbReference type="PANTHER" id="PTHR12191">
    <property type="entry name" value="SOLUTE CARRIER FAMILY 39"/>
    <property type="match status" value="1"/>
</dbReference>
<dbReference type="PANTHER" id="PTHR12191:SF22">
    <property type="entry name" value="ZINC TRANSPORTER ZIP6"/>
    <property type="match status" value="1"/>
</dbReference>
<dbReference type="Pfam" id="PF02535">
    <property type="entry name" value="Zip"/>
    <property type="match status" value="1"/>
</dbReference>
<organism evidence="9">
    <name type="scientific">Danio rerio</name>
    <name type="common">Zebrafish</name>
    <name type="synonym">Brachydanio rerio</name>
    <dbReference type="NCBI Taxonomy" id="7955"/>
    <lineage>
        <taxon>Eukaryota</taxon>
        <taxon>Metazoa</taxon>
        <taxon>Chordata</taxon>
        <taxon>Craniata</taxon>
        <taxon>Vertebrata</taxon>
        <taxon>Euteleostomi</taxon>
        <taxon>Actinopterygii</taxon>
        <taxon>Neopterygii</taxon>
        <taxon>Teleostei</taxon>
        <taxon>Ostariophysi</taxon>
        <taxon>Cypriniformes</taxon>
        <taxon>Danionidae</taxon>
        <taxon>Danioninae</taxon>
        <taxon>Danio</taxon>
    </lineage>
</organism>
<sequence>MMTFLCTRSGRRASGVECRIAAERAYFRVRGLPVANMIGWWPRLCPVMSLALLWACSVGAGSDCKSVAIETDSRIAEQTQQRHLQALFDKYGQNGSISLEGLFNLLKGVGLDRIRKVMVHHPGNAHNHTHTHDHTHTHVDKLTAHTHPVTTKKGDMDHSVEKSDPVPKAQPDPASGKKSQSDAHHNLYMKMNQESTTALTTPSYVTRSRRTNRSADYDFTQDHASFSPSQPNVTHSNHTHHDEDTPTHQHDDHDEHEHARASLGCQNASTILQTHGMRKEASLSVKDFSFLCPALLMQIDSKSCIVHEDEDEHSDHSHHHKHHHHHHDHQHLQHPHNHTNGRGQRNTPVYIAWLGGFLSITLISLLALVGVVLIPLMNRVCFNFLLSFLVALAVGTLSGDALLHLIPHSQGHHHHGHSEEHAEEEDSLRPVWTGLTALSGVYIMFLIEHFLTLGKMYKDKNQKVQKRVDLTTEVLESEKLPSLEENDVKIEAAETNGGRALAEEEEVMLGAELYNDIDCENKCHSHFHDTVGQSDEQHHHHHDYHHILHHHHSQNHHPHTHTHRHTHSYSQQHFEQAGVATLAWMVIMGDGLHNFSDGLAIGAAFTEGLSSGLSTSVAVFCHELPHELGDFAVLLKAGMSVRQAMLYNLLSALMGYLGMIIGILIGHYAENVATWIFALTAGLFMYVALVDMVPEMLHNDASEAGFSHYGFFLLQNAGILLGFGIMLIIAVFEDRIQLDLGY</sequence>
<keyword id="KW-1003">Cell membrane</keyword>
<keyword id="KW-0325">Glycoprotein</keyword>
<keyword id="KW-0472">Membrane</keyword>
<keyword id="KW-1185">Reference proteome</keyword>
<keyword id="KW-0812">Transmembrane</keyword>
<keyword id="KW-1133">Transmembrane helix</keyword>
<proteinExistence type="evidence at transcript level"/>
<name>S39A6_DANRE</name>
<reference key="1">
    <citation type="journal article" date="2004" name="Nature">
        <title>Zinc transporter LIVI controls epithelial-mesenchymal transition in zebrafish gastrula organizer.</title>
        <authorList>
            <person name="Yamashita S."/>
            <person name="Miyagi C."/>
            <person name="Fukada T."/>
            <person name="Kagara N."/>
            <person name="Che Y.S."/>
            <person name="Hirano T."/>
        </authorList>
    </citation>
    <scope>NUCLEOTIDE SEQUENCE [MRNA]</scope>
    <scope>FUNCTION</scope>
    <scope>DEVELOPMENTAL STAGE</scope>
</reference>
<reference key="2">
    <citation type="journal article" date="2013" name="Nature">
        <title>The zebrafish reference genome sequence and its relationship to the human genome.</title>
        <authorList>
            <person name="Howe K."/>
            <person name="Clark M.D."/>
            <person name="Torroja C.F."/>
            <person name="Torrance J."/>
            <person name="Berthelot C."/>
            <person name="Muffato M."/>
            <person name="Collins J.E."/>
            <person name="Humphray S."/>
            <person name="McLaren K."/>
            <person name="Matthews L."/>
            <person name="McLaren S."/>
            <person name="Sealy I."/>
            <person name="Caccamo M."/>
            <person name="Churcher C."/>
            <person name="Scott C."/>
            <person name="Barrett J.C."/>
            <person name="Koch R."/>
            <person name="Rauch G.J."/>
            <person name="White S."/>
            <person name="Chow W."/>
            <person name="Kilian B."/>
            <person name="Quintais L.T."/>
            <person name="Guerra-Assuncao J.A."/>
            <person name="Zhou Y."/>
            <person name="Gu Y."/>
            <person name="Yen J."/>
            <person name="Vogel J.H."/>
            <person name="Eyre T."/>
            <person name="Redmond S."/>
            <person name="Banerjee R."/>
            <person name="Chi J."/>
            <person name="Fu B."/>
            <person name="Langley E."/>
            <person name="Maguire S.F."/>
            <person name="Laird G.K."/>
            <person name="Lloyd D."/>
            <person name="Kenyon E."/>
            <person name="Donaldson S."/>
            <person name="Sehra H."/>
            <person name="Almeida-King J."/>
            <person name="Loveland J."/>
            <person name="Trevanion S."/>
            <person name="Jones M."/>
            <person name="Quail M."/>
            <person name="Willey D."/>
            <person name="Hunt A."/>
            <person name="Burton J."/>
            <person name="Sims S."/>
            <person name="McLay K."/>
            <person name="Plumb B."/>
            <person name="Davis J."/>
            <person name="Clee C."/>
            <person name="Oliver K."/>
            <person name="Clark R."/>
            <person name="Riddle C."/>
            <person name="Elliot D."/>
            <person name="Threadgold G."/>
            <person name="Harden G."/>
            <person name="Ware D."/>
            <person name="Begum S."/>
            <person name="Mortimore B."/>
            <person name="Kerry G."/>
            <person name="Heath P."/>
            <person name="Phillimore B."/>
            <person name="Tracey A."/>
            <person name="Corby N."/>
            <person name="Dunn M."/>
            <person name="Johnson C."/>
            <person name="Wood J."/>
            <person name="Clark S."/>
            <person name="Pelan S."/>
            <person name="Griffiths G."/>
            <person name="Smith M."/>
            <person name="Glithero R."/>
            <person name="Howden P."/>
            <person name="Barker N."/>
            <person name="Lloyd C."/>
            <person name="Stevens C."/>
            <person name="Harley J."/>
            <person name="Holt K."/>
            <person name="Panagiotidis G."/>
            <person name="Lovell J."/>
            <person name="Beasley H."/>
            <person name="Henderson C."/>
            <person name="Gordon D."/>
            <person name="Auger K."/>
            <person name="Wright D."/>
            <person name="Collins J."/>
            <person name="Raisen C."/>
            <person name="Dyer L."/>
            <person name="Leung K."/>
            <person name="Robertson L."/>
            <person name="Ambridge K."/>
            <person name="Leongamornlert D."/>
            <person name="McGuire S."/>
            <person name="Gilderthorp R."/>
            <person name="Griffiths C."/>
            <person name="Manthravadi D."/>
            <person name="Nichol S."/>
            <person name="Barker G."/>
            <person name="Whitehead S."/>
            <person name="Kay M."/>
            <person name="Brown J."/>
            <person name="Murnane C."/>
            <person name="Gray E."/>
            <person name="Humphries M."/>
            <person name="Sycamore N."/>
            <person name="Barker D."/>
            <person name="Saunders D."/>
            <person name="Wallis J."/>
            <person name="Babbage A."/>
            <person name="Hammond S."/>
            <person name="Mashreghi-Mohammadi M."/>
            <person name="Barr L."/>
            <person name="Martin S."/>
            <person name="Wray P."/>
            <person name="Ellington A."/>
            <person name="Matthews N."/>
            <person name="Ellwood M."/>
            <person name="Woodmansey R."/>
            <person name="Clark G."/>
            <person name="Cooper J."/>
            <person name="Tromans A."/>
            <person name="Grafham D."/>
            <person name="Skuce C."/>
            <person name="Pandian R."/>
            <person name="Andrews R."/>
            <person name="Harrison E."/>
            <person name="Kimberley A."/>
            <person name="Garnett J."/>
            <person name="Fosker N."/>
            <person name="Hall R."/>
            <person name="Garner P."/>
            <person name="Kelly D."/>
            <person name="Bird C."/>
            <person name="Palmer S."/>
            <person name="Gehring I."/>
            <person name="Berger A."/>
            <person name="Dooley C.M."/>
            <person name="Ersan-Urun Z."/>
            <person name="Eser C."/>
            <person name="Geiger H."/>
            <person name="Geisler M."/>
            <person name="Karotki L."/>
            <person name="Kirn A."/>
            <person name="Konantz J."/>
            <person name="Konantz M."/>
            <person name="Oberlander M."/>
            <person name="Rudolph-Geiger S."/>
            <person name="Teucke M."/>
            <person name="Lanz C."/>
            <person name="Raddatz G."/>
            <person name="Osoegawa K."/>
            <person name="Zhu B."/>
            <person name="Rapp A."/>
            <person name="Widaa S."/>
            <person name="Langford C."/>
            <person name="Yang F."/>
            <person name="Schuster S.C."/>
            <person name="Carter N.P."/>
            <person name="Harrow J."/>
            <person name="Ning Z."/>
            <person name="Herrero J."/>
            <person name="Searle S.M."/>
            <person name="Enright A."/>
            <person name="Geisler R."/>
            <person name="Plasterk R.H."/>
            <person name="Lee C."/>
            <person name="Westerfield M."/>
            <person name="de Jong P.J."/>
            <person name="Zon L.I."/>
            <person name="Postlethwait J.H."/>
            <person name="Nusslein-Volhard C."/>
            <person name="Hubbard T.J."/>
            <person name="Roest Crollius H."/>
            <person name="Rogers J."/>
            <person name="Stemple D.L."/>
        </authorList>
    </citation>
    <scope>NUCLEOTIDE SEQUENCE [LARGE SCALE GENOMIC DNA]</scope>
    <source>
        <strain>Tuebingen</strain>
    </source>
</reference>
<reference key="3">
    <citation type="journal article" date="2019" name="Biochem. Biophys. Res. Commun.">
        <title>SLC39A6/ZIP6 is essential for zinc homeostasis and T-cell development in zebrafish.</title>
        <authorList>
            <person name="Zhao L."/>
            <person name="Tan J."/>
            <person name="Li D."/>
            <person name="Jiang L."/>
            <person name="Li T."/>
            <person name="Yang Y."/>
            <person name="Wang G."/>
            <person name="Shang Z."/>
            <person name="Wang J."/>
            <person name="Zhou J."/>
        </authorList>
    </citation>
    <scope>FUNCTION</scope>
    <scope>TRANSPORTER ACTIVITY</scope>
    <scope>DISRUPTION PHENOTYPE</scope>
</reference>